<sequence length="2871" mass="312699">MRRGRLLEVALGFTVLLASYTSHRAEANLEAGNGKETRASRAKRRGGGGHDALKGPNVCGSRYNAYCCPGWKTLPGGNQCIVPICRHSCGDGFCSRPNMCTCPSGQIAPSCGSRSIQHCNIRCMNGGSCSDDHCLCQKGYIGTHCGQPVCESGCLNGGRCVAPNRCACTYGFTGPQCERDYRTGPCFTVVSNQMCQGQLSGIVCTKTLCCATVGRAWGHPCEMCPAQPHPCRRGFIPNIRTGACQDVDECQAIPGLCQGGNCINTVGSFECKCPAGHKFNEVSQKCEDIDECSTIPGICDGGECTNTVSSYFCKCPPGFYTSPDGTRCIDVRPGYCYTALTNGRCSNQLPQSITKMQCCCDVGRCWSPGVTVTPEMCPIRATEDFNKLCSVPMVVPERPGYPSPPLGPIPPVHPVPPGFPPGPQIPVPRPPVEYPYPSREPPRVLPVNVTDYCQLFRYLCHNGRCIPTPGSYRCECNKGFQLDLRGECIDVDECEKNPCAGGECINNQGSYTCQCRPGYQSTLTRTECRDIDECLQNGRICNNGRCINTDGSFHCVCNAGFHVTRDGKNCEDMDECSIRNMCLNGMCINEDGSFKCICKPGFQLASDGRYCKDINECETSGICMNGRCVNTDGSYRCECFPGLAVGLDGRVCVDTHMRSTCYGGYKRGQCVKPLFGAVTKSECCCASTEYAFGEPCQPCPSQNSAEYQALCSSGPGMTSAGSDINECALDPDICPNGICENLRGTYKCICNSGYEVDSTGKNCVDINECVLNSLLCDNGQCRNTPGSFVCTCPKGFIYKPDLKTCEDIDECESSPCINGVCKNSPGSFICECSSESTLDPTKTICIETIKGTCWQTIIDGRCEININGATLKSQCCSSLGAAWGSPCTPCQVDPICGKGYSRIKGTQCEDIDECEVFPGVCKNGLCVNSKGSFKCQCPNGMTLDATGRICLDIRLETCFLRYEDEECTLPVVGRHRMDACCCSVGAAWGTEECEECPPRNTPEYEELCPRGPGFATKEITNGKPFFKDINECKMIPNLCTHGKCRNTIGSFKCRCDSGFALDSEERNCIDIDECRISPDLCGRGQCVNTPGDFECKCDEGYESGFMMMKNCMDIDECQRDPLLCRGGVCLNTEGSYRCECPSGHQMSPNISACIDINECELSAHLCPHGRCVNLIGKYQRARNPGYHSTPDRLFCVDIDECSIMNGGCETFCTNSEGSYECSCQPGFALMPDQRSCTDIDECEDNPNICDGGQCTNIPGEYRCLCYDGFMASEDMKTCVDVNECDLNPNICLSGTCENTKGSFICHCDMGYSGKKGKTGCTDINECEIGAHNCDRHAVCTNTAGSFNCSCSPGWIGDGIKCTDLDECSNGTHMCSQHADCKNTMGSYRCLCKEGYTGDGFTCADLDECSENVKLCGNVQCLYAPGGYHCEYDMGFVPSADRKSCVDSDECSLPNICVFGTCHNLPGLFRCECEIGYELDRSGGNCTDVNECLEPPTCISGNCVNTPGSYTCVCPPDFELNPTRVGCVDTRSGNCYLDVRPRGDNGDTACSNEIGVGVSKASCCCSLGKAWGTPCEQCPPVNTSEYKILCPGGEGFRPNPITVILEDIDECQELPGLCQGGKCINTFGSFQCRCPTGYYLNEDTRVCDDVNECETPGICGPGTCYNTVGNYTCICPPDYMQVNGGNNCMDMRRSLCYRNYYADNQTCDGELLFNMTKKMCCCSYNIGRAWNKPCEQCPIPSTDEFATLCGSQRPGFVIDIYTGLPVDIDECREIPGVCENGVCINMVGSFRCECPVGFFYNDKLLVCEDIDECQNGPVCQRNAECINTAGSYRCDCKPGYRFTSTGQCNDRNECQEIPNICSHGQCIDTVGSFYCLCHTGFKTNADQTMCLDINECERDACGNGTCRNTIGSFNCRCNHGFILSHNNDCIDVDECATGNGNLCRNGQCINTVGSFQCQCNEGYEVAPDGRTCVDINECLLEPGKCAPGTCQNLDGSYRCICPPGYSLQNDKCEDIDECVEEPEICALGTCSNTEGSFKCLCPDGFSLSSTGRRCQDLRMSYCYAKFEGGKCSSPKSRNHSKQECCCALKGEGWGDPCELCPTEPDEAFRQICPYGSGIIVGPDDSAVDMDECKEPDVCKHGQCINTDGSYRCECPFGYILEGNECVDTDECSVGNPCGNGTCKNVIGGFECTCEEGFEPGPMMTCEDINECAQNPLLCAFRCVNTYGSYECKCPTGYVLREDRRMCKDEDECEEGKHDCAEKQMECKNLIGMYICICGPGYQRRPDGEGCVDENECQTKPGICENGRCLNTRGSYTCECNDGFTASPTQDECLDNREGYCFTEVLQNMCQIGSSNRNPVTKSECCCDGGRGWGPHCEICPFQGTVAFKKLCPHGRGFMTNGADIDECKVIHDVCRNGECINDRGSYHCICKTGYTPDITGTACVDLNECNQAPKPCNFICKNTEGSYQCSCPKGYILQEDGRSCKDLDECATKQHNCQFLCVNTIGSFACKCPPGFTQHHTACIDNNECTSDINLCGAKGICQNTPGSFTCECQRGFSLDQSGASCEDVDECEGNHRCQHGCQNIIGGYRCSCPQGYLQHYQWNQCVDENECLSAHICGGASCHNTLGSYKCMCPAGFQYEQFSGGCQDINECGSSQAPCSYGCSNTEGGYLCGCPPGYFRIGQGHCVSGMGMGRGSPEPPASGEMDDNSLSPEACYECKINGYPKRGRKRRSTNETDAFNIEDQPETESNVSLASWDVEKTAVFAFNISHISNKVRILELLPALTTLTNHNRYLIESGNENGFFKINQKEGISYLHFTKKKPVAGTYSLQISSTPLYKKKELNQLEDKYDKDYLSGELGDNLKMKIQILLH</sequence>
<feature type="signal peptide" evidence="1">
    <location>
        <begin position="1"/>
        <end position="24"/>
    </location>
</feature>
<feature type="propeptide" id="PRO_0000436885" evidence="1">
    <location>
        <begin position="25"/>
        <end position="44"/>
    </location>
</feature>
<feature type="chain" id="PRO_0000007583" description="Fibrillin-1" evidence="1">
    <location>
        <begin position="45"/>
        <end position="2731"/>
    </location>
</feature>
<feature type="chain" id="PRO_0000436886" description="Asprosin" evidence="1">
    <location>
        <begin position="2732"/>
        <end position="2871"/>
    </location>
</feature>
<feature type="domain" description="EGF-like 1" evidence="4">
    <location>
        <begin position="81"/>
        <end position="112"/>
    </location>
</feature>
<feature type="domain" description="EGF-like 2" evidence="4">
    <location>
        <begin position="115"/>
        <end position="146"/>
    </location>
</feature>
<feature type="domain" description="EGF-like 3" evidence="4">
    <location>
        <begin position="147"/>
        <end position="178"/>
    </location>
</feature>
<feature type="domain" description="TB 1">
    <location>
        <begin position="184"/>
        <end position="236"/>
    </location>
</feature>
<feature type="domain" description="EGF-like 4; calcium-binding" evidence="4">
    <location>
        <begin position="246"/>
        <end position="287"/>
    </location>
</feature>
<feature type="domain" description="EGF-like 5; calcium-binding" evidence="4">
    <location>
        <begin position="288"/>
        <end position="329"/>
    </location>
</feature>
<feature type="domain" description="TB 2">
    <location>
        <begin position="334"/>
        <end position="389"/>
    </location>
</feature>
<feature type="domain" description="EGF-like 6" evidence="4">
    <location>
        <begin position="449"/>
        <end position="489"/>
    </location>
</feature>
<feature type="domain" description="EGF-like 7; calcium-binding" evidence="4">
    <location>
        <begin position="490"/>
        <end position="529"/>
    </location>
</feature>
<feature type="domain" description="EGF-like 8; calcium-binding" evidence="4">
    <location>
        <begin position="530"/>
        <end position="571"/>
    </location>
</feature>
<feature type="domain" description="EGF-like 9; calcium-binding" evidence="4">
    <location>
        <begin position="572"/>
        <end position="612"/>
    </location>
</feature>
<feature type="domain" description="EGF-like 10; calcium-binding" evidence="4">
    <location>
        <begin position="613"/>
        <end position="653"/>
    </location>
</feature>
<feature type="domain" description="TB 3">
    <location>
        <begin position="659"/>
        <end position="711"/>
    </location>
</feature>
<feature type="domain" description="EGF-like 11; calcium-binding" evidence="4">
    <location>
        <begin position="723"/>
        <end position="764"/>
    </location>
</feature>
<feature type="domain" description="EGF-like 12; calcium-binding" evidence="4">
    <location>
        <begin position="765"/>
        <end position="806"/>
    </location>
</feature>
<feature type="domain" description="EGF-like 13; calcium-binding" evidence="4">
    <location>
        <begin position="807"/>
        <end position="846"/>
    </location>
</feature>
<feature type="domain" description="TB 4">
    <location>
        <begin position="851"/>
        <end position="902"/>
    </location>
</feature>
<feature type="domain" description="EGF-like 14; calcium-binding" evidence="4">
    <location>
        <begin position="910"/>
        <end position="951"/>
    </location>
</feature>
<feature type="domain" description="TB 5">
    <location>
        <begin position="956"/>
        <end position="1008"/>
    </location>
</feature>
<feature type="domain" description="EGF-like 15; calcium-binding" evidence="4">
    <location>
        <begin position="1028"/>
        <end position="1069"/>
    </location>
</feature>
<feature type="domain" description="EGF-like 16; calcium-binding" evidence="4">
    <location>
        <begin position="1070"/>
        <end position="1112"/>
    </location>
</feature>
<feature type="domain" description="EGF-like 17; calcium-binding" evidence="4">
    <location>
        <begin position="1113"/>
        <end position="1154"/>
    </location>
</feature>
<feature type="domain" description="EGF-like 18; calcium-binding" evidence="4">
    <location>
        <begin position="1155"/>
        <end position="1196"/>
    </location>
</feature>
<feature type="domain" description="EGF-like 19; calcium-binding" evidence="4">
    <location>
        <begin position="1197"/>
        <end position="1237"/>
    </location>
</feature>
<feature type="domain" description="EGF-like 20; calcium-binding" evidence="4">
    <location>
        <begin position="1238"/>
        <end position="1279"/>
    </location>
</feature>
<feature type="domain" description="EGF-like 21; calcium-binding" evidence="4">
    <location>
        <begin position="1280"/>
        <end position="1321"/>
    </location>
</feature>
<feature type="domain" description="EGF-like 22; calcium-binding" evidence="4">
    <location>
        <begin position="1322"/>
        <end position="1362"/>
    </location>
</feature>
<feature type="domain" description="EGF-like 23; calcium-binding" evidence="4">
    <location>
        <begin position="1363"/>
        <end position="1403"/>
    </location>
</feature>
<feature type="domain" description="EGF-like 24; calcium-binding" evidence="4">
    <location>
        <begin position="1404"/>
        <end position="1445"/>
    </location>
</feature>
<feature type="domain" description="EGF-like 25; calcium-binding" evidence="4">
    <location>
        <begin position="1446"/>
        <end position="1486"/>
    </location>
</feature>
<feature type="domain" description="EGF-like 26; calcium-binding" evidence="4">
    <location>
        <begin position="1487"/>
        <end position="1527"/>
    </location>
</feature>
<feature type="domain" description="TB 6">
    <location>
        <begin position="1532"/>
        <end position="1589"/>
    </location>
</feature>
<feature type="domain" description="EGF-like 27; calcium-binding" evidence="4">
    <location>
        <begin position="1606"/>
        <end position="1647"/>
    </location>
</feature>
<feature type="domain" description="EGF-like 28; calcium-binding" evidence="4">
    <location>
        <begin position="1648"/>
        <end position="1688"/>
    </location>
</feature>
<feature type="domain" description="TB 7">
    <location>
        <begin position="1693"/>
        <end position="1748"/>
    </location>
</feature>
<feature type="domain" description="EGF-like 29; calcium-binding" evidence="4">
    <location>
        <begin position="1766"/>
        <end position="1807"/>
    </location>
</feature>
<feature type="domain" description="EGF-like 30; calcium-binding" evidence="4">
    <location>
        <begin position="1808"/>
        <end position="1848"/>
    </location>
</feature>
<feature type="domain" description="EGF-like 31; calcium-binding" evidence="4">
    <location>
        <begin position="1849"/>
        <end position="1890"/>
    </location>
</feature>
<feature type="domain" description="EGF-like 32; calcium-binding" evidence="4">
    <location>
        <begin position="1891"/>
        <end position="1929"/>
    </location>
</feature>
<feature type="domain" description="EGF-like 33; calcium-binding" evidence="4">
    <location>
        <begin position="1930"/>
        <end position="1972"/>
    </location>
</feature>
<feature type="domain" description="EGF-like 34; calcium-binding" evidence="4">
    <location>
        <begin position="1973"/>
        <end position="2012"/>
    </location>
</feature>
<feature type="domain" description="EGF-like 35; calcium-binding" evidence="4">
    <location>
        <begin position="2013"/>
        <end position="2054"/>
    </location>
</feature>
<feature type="domain" description="TB 8">
    <location>
        <begin position="2059"/>
        <end position="2111"/>
    </location>
</feature>
<feature type="domain" description="EGF-like 36; calcium-binding" evidence="4">
    <location>
        <begin position="2127"/>
        <end position="2165"/>
    </location>
</feature>
<feature type="domain" description="EGF-like 37; calcium-binding" evidence="4">
    <location>
        <begin position="2166"/>
        <end position="2205"/>
    </location>
</feature>
<feature type="domain" description="EGF-like 38; calcium-binding" evidence="4">
    <location>
        <begin position="2206"/>
        <end position="2246"/>
    </location>
</feature>
<feature type="domain" description="EGF-like 39; calcium-binding" evidence="4">
    <location>
        <begin position="2247"/>
        <end position="2290"/>
    </location>
</feature>
<feature type="domain" description="EGF-like 40; calcium-binding" evidence="4">
    <location>
        <begin position="2291"/>
        <end position="2332"/>
    </location>
</feature>
<feature type="domain" description="TB 9">
    <location>
        <begin position="2337"/>
        <end position="2390"/>
    </location>
</feature>
<feature type="domain" description="EGF-like 41; calcium-binding" evidence="4">
    <location>
        <begin position="2402"/>
        <end position="2443"/>
    </location>
</feature>
<feature type="domain" description="EGF-like 42; calcium-binding" evidence="4">
    <location>
        <begin position="2444"/>
        <end position="2484"/>
    </location>
</feature>
<feature type="domain" description="EGF-like 43; calcium-binding" evidence="4">
    <location>
        <begin position="2485"/>
        <end position="2523"/>
    </location>
</feature>
<feature type="domain" description="EGF-like 44; calcium-binding" evidence="4">
    <location>
        <begin position="2524"/>
        <end position="2566"/>
    </location>
</feature>
<feature type="domain" description="EGF-like 45; calcium-binding" evidence="4">
    <location>
        <begin position="2567"/>
        <end position="2606"/>
    </location>
</feature>
<feature type="domain" description="EGF-like 46; calcium-binding" evidence="4">
    <location>
        <begin position="2607"/>
        <end position="2647"/>
    </location>
</feature>
<feature type="domain" description="EGF-like 47; calcium-binding" evidence="4">
    <location>
        <begin position="2648"/>
        <end position="2687"/>
    </location>
</feature>
<feature type="region of interest" description="Disordered" evidence="5">
    <location>
        <begin position="29"/>
        <end position="49"/>
    </location>
</feature>
<feature type="region of interest" description="N-terminal domain" evidence="1">
    <location>
        <begin position="45"/>
        <end position="450"/>
    </location>
</feature>
<feature type="region of interest" description="Fibrillin unique N-terminal (FUN) domain" evidence="1">
    <location>
        <begin position="45"/>
        <end position="81"/>
    </location>
</feature>
<feature type="region of interest" description="Interaction with MFAP4" evidence="1">
    <location>
        <begin position="119"/>
        <end position="329"/>
    </location>
</feature>
<feature type="region of interest" description="Hybrid domain 1" evidence="1">
    <location>
        <begin position="195"/>
        <end position="221"/>
    </location>
</feature>
<feature type="region of interest" description="Hybrid domain 2" evidence="1">
    <location>
        <begin position="862"/>
        <end position="887"/>
    </location>
</feature>
<feature type="region of interest" description="C-terminal domain" evidence="1">
    <location>
        <begin position="1528"/>
        <end position="2731"/>
    </location>
</feature>
<feature type="short sequence motif" description="Cell attachment site" evidence="1">
    <location>
        <begin position="1541"/>
        <end position="1543"/>
    </location>
</feature>
<feature type="compositionally biased region" description="Basic and acidic residues" evidence="5">
    <location>
        <begin position="29"/>
        <end position="39"/>
    </location>
</feature>
<feature type="site" description="Cleavage; by furin" evidence="1">
    <location>
        <begin position="44"/>
        <end position="45"/>
    </location>
</feature>
<feature type="site" description="Cleavage; by furin" evidence="1">
    <location>
        <begin position="2731"/>
        <end position="2732"/>
    </location>
</feature>
<feature type="modified residue" description="Phosphoserine" evidence="1">
    <location>
        <position position="2702"/>
    </location>
</feature>
<feature type="modified residue" description="Phosphoserine" evidence="2">
    <location>
        <position position="2709"/>
    </location>
</feature>
<feature type="glycosylation site" description="O-linked (Glc) serine" evidence="1">
    <location>
        <position position="268"/>
    </location>
</feature>
<feature type="glycosylation site" description="N-linked (GlcNAc...) asparagine" evidence="3">
    <location>
        <position position="448"/>
    </location>
</feature>
<feature type="glycosylation site" description="O-linked (Glc) serine" evidence="1">
    <location>
        <position position="471"/>
    </location>
</feature>
<feature type="glycosylation site" description="O-linked (Glc) serine" evidence="1">
    <location>
        <position position="510"/>
    </location>
</feature>
<feature type="glycosylation site" description="O-linked (Glc) serine" evidence="1">
    <location>
        <position position="1135"/>
    </location>
</feature>
<feature type="glycosylation site" description="N-linked (GlcNAc...) asparagine" evidence="3">
    <location>
        <position position="1149"/>
    </location>
</feature>
<feature type="glycosylation site" description="O-linked (Glc) serine" evidence="1">
    <location>
        <position position="1218"/>
    </location>
</feature>
<feature type="glycosylation site" description="O-linked (Glc) serine" evidence="1">
    <location>
        <position position="1302"/>
    </location>
</feature>
<feature type="glycosylation site" description="O-linked (Glc) serine" evidence="1">
    <location>
        <position position="1345"/>
    </location>
</feature>
<feature type="glycosylation site" description="N-linked (GlcNAc...) asparagine" evidence="3">
    <location>
        <position position="1347"/>
    </location>
</feature>
<feature type="glycosylation site" description="N-linked (GlcNAc...) asparagine" evidence="3">
    <location>
        <position position="1369"/>
    </location>
</feature>
<feature type="glycosylation site" description="O-linked (Glc) serine" evidence="1">
    <location>
        <position position="1386"/>
    </location>
</feature>
<feature type="glycosylation site" description="N-linked (GlcNAc...) asparagine" evidence="3">
    <location>
        <position position="1484"/>
    </location>
</feature>
<feature type="glycosylation site" description="O-linked (Glc) serine" evidence="1">
    <location>
        <position position="1508"/>
    </location>
</feature>
<feature type="glycosylation site" description="N-linked (GlcNAc...) asparagine" evidence="3">
    <location>
        <position position="1581"/>
    </location>
</feature>
<feature type="glycosylation site" description="O-linked (Glc) serine" evidence="1">
    <location>
        <position position="1628"/>
    </location>
</feature>
<feature type="glycosylation site" description="N-linked (GlcNAc...) asparagine" evidence="3">
    <location>
        <position position="1669"/>
    </location>
</feature>
<feature type="glycosylation site" description="N-linked (GlcNAc...) asparagine" evidence="3">
    <location>
        <position position="1703"/>
    </location>
</feature>
<feature type="glycosylation site" description="N-linked (GlcNAc...) asparagine" evidence="3">
    <location>
        <position position="1713"/>
    </location>
</feature>
<feature type="glycosylation site" description="O-linked (Glc) serine" evidence="1">
    <location>
        <position position="1830"/>
    </location>
</feature>
<feature type="glycosylation site" description="O-linked (Glc) serine" evidence="1">
    <location>
        <position position="1871"/>
    </location>
</feature>
<feature type="glycosylation site" description="N-linked (GlcNAc...) asparagine" evidence="3">
    <location>
        <position position="1902"/>
    </location>
</feature>
<feature type="glycosylation site" description="O-linked (Glc) serine" evidence="1">
    <location>
        <position position="1911"/>
    </location>
</feature>
<feature type="glycosylation site" description="O-linked (Glc) serine" evidence="1">
    <location>
        <position position="1953"/>
    </location>
</feature>
<feature type="glycosylation site" description="O-linked (Glc) serine" evidence="1">
    <location>
        <position position="2035"/>
    </location>
</feature>
<feature type="glycosylation site" description="N-linked (GlcNAc...) asparagine" evidence="3">
    <location>
        <position position="2077"/>
    </location>
</feature>
<feature type="glycosylation site" description="O-linked (Glc) serine" evidence="1">
    <location>
        <position position="2148"/>
    </location>
</feature>
<feature type="glycosylation site" description="N-linked (GlcNAc...) asparagine" evidence="3">
    <location>
        <position position="2178"/>
    </location>
</feature>
<feature type="glycosylation site" description="O-linked (Glc) serine" evidence="1">
    <location>
        <position position="2227"/>
    </location>
</feature>
<feature type="glycosylation site" description="O-linked (Glc) serine" evidence="1">
    <location>
        <position position="2313"/>
    </location>
</feature>
<feature type="glycosylation site" description="O-linked (Glc) serine" evidence="1">
    <location>
        <position position="2465"/>
    </location>
</feature>
<feature type="glycosylation site" description="O-linked (Glc) serine" evidence="1">
    <location>
        <position position="2547"/>
    </location>
</feature>
<feature type="glycosylation site" description="O-linked (Glc) serine" evidence="1">
    <location>
        <position position="2628"/>
    </location>
</feature>
<feature type="glycosylation site" description="N-linked (GlcNAc...) asparagine" evidence="3">
    <location>
        <position position="2734"/>
    </location>
</feature>
<feature type="glycosylation site" description="N-linked (GlcNAc...) asparagine" evidence="3">
    <location>
        <position position="2750"/>
    </location>
</feature>
<feature type="glycosylation site" description="N-linked (GlcNAc...) asparagine" evidence="3">
    <location>
        <position position="2767"/>
    </location>
</feature>
<feature type="disulfide bond" evidence="1">
    <location>
        <begin position="59"/>
        <end position="68"/>
    </location>
</feature>
<feature type="disulfide bond" evidence="1">
    <location>
        <begin position="67"/>
        <end position="80"/>
    </location>
</feature>
<feature type="disulfide bond" evidence="4">
    <location>
        <begin position="85"/>
        <end position="94"/>
    </location>
</feature>
<feature type="disulfide bond" evidence="4">
    <location>
        <begin position="89"/>
        <end position="100"/>
    </location>
</feature>
<feature type="disulfide bond" evidence="4">
    <location>
        <begin position="102"/>
        <end position="111"/>
    </location>
</feature>
<feature type="disulfide bond" evidence="4">
    <location>
        <begin position="119"/>
        <end position="129"/>
    </location>
</feature>
<feature type="disulfide bond" evidence="4">
    <location>
        <begin position="123"/>
        <end position="134"/>
    </location>
</feature>
<feature type="disulfide bond" evidence="4">
    <location>
        <begin position="136"/>
        <end position="145"/>
    </location>
</feature>
<feature type="disulfide bond" evidence="4">
    <location>
        <begin position="150"/>
        <end position="160"/>
    </location>
</feature>
<feature type="disulfide bond" evidence="4">
    <location>
        <begin position="154"/>
        <end position="166"/>
    </location>
</feature>
<feature type="disulfide bond" evidence="4">
    <location>
        <begin position="168"/>
        <end position="177"/>
    </location>
</feature>
<feature type="disulfide bond" evidence="4">
    <location>
        <begin position="250"/>
        <end position="262"/>
    </location>
</feature>
<feature type="disulfide bond" evidence="4">
    <location>
        <begin position="257"/>
        <end position="271"/>
    </location>
</feature>
<feature type="disulfide bond" evidence="4">
    <location>
        <begin position="273"/>
        <end position="286"/>
    </location>
</feature>
<feature type="disulfide bond" evidence="4">
    <location>
        <begin position="292"/>
        <end position="304"/>
    </location>
</feature>
<feature type="disulfide bond" evidence="4">
    <location>
        <begin position="299"/>
        <end position="313"/>
    </location>
</feature>
<feature type="disulfide bond" evidence="4">
    <location>
        <begin position="315"/>
        <end position="328"/>
    </location>
</feature>
<feature type="disulfide bond" evidence="4">
    <location>
        <begin position="453"/>
        <end position="465"/>
    </location>
</feature>
<feature type="disulfide bond" evidence="4">
    <location>
        <begin position="460"/>
        <end position="474"/>
    </location>
</feature>
<feature type="disulfide bond" evidence="4">
    <location>
        <begin position="476"/>
        <end position="488"/>
    </location>
</feature>
<feature type="disulfide bond" evidence="4">
    <location>
        <begin position="494"/>
        <end position="504"/>
    </location>
</feature>
<feature type="disulfide bond" evidence="4">
    <location>
        <begin position="499"/>
        <end position="513"/>
    </location>
</feature>
<feature type="disulfide bond" evidence="4">
    <location>
        <begin position="515"/>
        <end position="528"/>
    </location>
</feature>
<feature type="disulfide bond" evidence="4">
    <location>
        <begin position="534"/>
        <end position="546"/>
    </location>
</feature>
<feature type="disulfide bond" evidence="4">
    <location>
        <begin position="541"/>
        <end position="555"/>
    </location>
</feature>
<feature type="disulfide bond" evidence="4">
    <location>
        <begin position="557"/>
        <end position="570"/>
    </location>
</feature>
<feature type="disulfide bond" evidence="4">
    <location>
        <begin position="576"/>
        <end position="587"/>
    </location>
</feature>
<feature type="disulfide bond" evidence="4">
    <location>
        <begin position="582"/>
        <end position="596"/>
    </location>
</feature>
<feature type="disulfide bond" evidence="4">
    <location>
        <begin position="598"/>
        <end position="611"/>
    </location>
</feature>
<feature type="disulfide bond" evidence="4">
    <location>
        <begin position="617"/>
        <end position="628"/>
    </location>
</feature>
<feature type="disulfide bond" evidence="4">
    <location>
        <begin position="623"/>
        <end position="637"/>
    </location>
</feature>
<feature type="disulfide bond" evidence="4">
    <location>
        <begin position="639"/>
        <end position="652"/>
    </location>
</feature>
<feature type="disulfide bond" evidence="4">
    <location>
        <begin position="727"/>
        <end position="739"/>
    </location>
</feature>
<feature type="disulfide bond" evidence="4">
    <location>
        <begin position="734"/>
        <end position="748"/>
    </location>
</feature>
<feature type="disulfide bond" evidence="4">
    <location>
        <begin position="750"/>
        <end position="763"/>
    </location>
</feature>
<feature type="disulfide bond" evidence="4">
    <location>
        <begin position="769"/>
        <end position="781"/>
    </location>
</feature>
<feature type="disulfide bond" evidence="4">
    <location>
        <begin position="776"/>
        <end position="790"/>
    </location>
</feature>
<feature type="disulfide bond" evidence="4">
    <location>
        <begin position="792"/>
        <end position="805"/>
    </location>
</feature>
<feature type="disulfide bond" evidence="4">
    <location>
        <begin position="811"/>
        <end position="821"/>
    </location>
</feature>
<feature type="disulfide bond" evidence="4">
    <location>
        <begin position="816"/>
        <end position="830"/>
    </location>
</feature>
<feature type="disulfide bond" evidence="4">
    <location>
        <begin position="832"/>
        <end position="845"/>
    </location>
</feature>
<feature type="disulfide bond" evidence="4">
    <location>
        <begin position="853"/>
        <end position="875"/>
    </location>
</feature>
<feature type="disulfide bond" evidence="4">
    <location>
        <begin position="862"/>
        <end position="887"/>
    </location>
</feature>
<feature type="disulfide bond" evidence="4">
    <location>
        <begin position="876"/>
        <end position="890"/>
    </location>
</feature>
<feature type="disulfide bond" evidence="4">
    <location>
        <begin position="896"/>
        <end position="908"/>
    </location>
</feature>
<feature type="disulfide bond" evidence="4">
    <location>
        <begin position="914"/>
        <end position="926"/>
    </location>
</feature>
<feature type="disulfide bond" evidence="4">
    <location>
        <begin position="921"/>
        <end position="935"/>
    </location>
</feature>
<feature type="disulfide bond" evidence="4">
    <location>
        <begin position="937"/>
        <end position="950"/>
    </location>
</feature>
<feature type="disulfide bond" evidence="4">
    <location>
        <begin position="1032"/>
        <end position="1044"/>
    </location>
</feature>
<feature type="disulfide bond" evidence="4">
    <location>
        <begin position="1039"/>
        <end position="1053"/>
    </location>
</feature>
<feature type="disulfide bond" evidence="4">
    <location>
        <begin position="1055"/>
        <end position="1068"/>
    </location>
</feature>
<feature type="disulfide bond" evidence="4">
    <location>
        <begin position="1074"/>
        <end position="1086"/>
    </location>
</feature>
<feature type="disulfide bond" evidence="4">
    <location>
        <begin position="1081"/>
        <end position="1095"/>
    </location>
</feature>
<feature type="disulfide bond" evidence="4">
    <location>
        <begin position="1097"/>
        <end position="1111"/>
    </location>
</feature>
<feature type="disulfide bond" evidence="4">
    <location>
        <begin position="1117"/>
        <end position="1129"/>
    </location>
</feature>
<feature type="disulfide bond" evidence="4">
    <location>
        <begin position="1124"/>
        <end position="1138"/>
    </location>
</feature>
<feature type="disulfide bond" evidence="4">
    <location>
        <begin position="1140"/>
        <end position="1153"/>
    </location>
</feature>
<feature type="disulfide bond" evidence="4">
    <location>
        <begin position="1159"/>
        <end position="1171"/>
    </location>
</feature>
<feature type="disulfide bond" evidence="4">
    <location>
        <begin position="1201"/>
        <end position="1212"/>
    </location>
</feature>
<feature type="disulfide bond" evidence="4">
    <location>
        <begin position="1208"/>
        <end position="1221"/>
    </location>
</feature>
<feature type="disulfide bond" evidence="4">
    <location>
        <begin position="1223"/>
        <end position="1236"/>
    </location>
</feature>
<feature type="disulfide bond" evidence="4">
    <location>
        <begin position="1242"/>
        <end position="1254"/>
    </location>
</feature>
<feature type="disulfide bond" evidence="4">
    <location>
        <begin position="1249"/>
        <end position="1263"/>
    </location>
</feature>
<feature type="disulfide bond" evidence="4">
    <location>
        <begin position="1265"/>
        <end position="1278"/>
    </location>
</feature>
<feature type="disulfide bond" evidence="4">
    <location>
        <begin position="1284"/>
        <end position="1296"/>
    </location>
</feature>
<feature type="disulfide bond" evidence="4">
    <location>
        <begin position="1291"/>
        <end position="1305"/>
    </location>
</feature>
<feature type="disulfide bond" evidence="4">
    <location>
        <begin position="1307"/>
        <end position="1320"/>
    </location>
</feature>
<feature type="disulfide bond" evidence="4">
    <location>
        <begin position="1326"/>
        <end position="1339"/>
    </location>
</feature>
<feature type="disulfide bond" evidence="4">
    <location>
        <begin position="1333"/>
        <end position="1348"/>
    </location>
</feature>
<feature type="disulfide bond" evidence="4">
    <location>
        <begin position="1350"/>
        <end position="1361"/>
    </location>
</feature>
<feature type="disulfide bond" evidence="4">
    <location>
        <begin position="1367"/>
        <end position="1380"/>
    </location>
</feature>
<feature type="disulfide bond" evidence="4">
    <location>
        <begin position="1374"/>
        <end position="1389"/>
    </location>
</feature>
<feature type="disulfide bond" evidence="4">
    <location>
        <begin position="1391"/>
        <end position="1402"/>
    </location>
</feature>
<feature type="disulfide bond" evidence="4">
    <location>
        <begin position="1408"/>
        <end position="1420"/>
    </location>
</feature>
<feature type="disulfide bond" evidence="4">
    <location>
        <begin position="1415"/>
        <end position="1429"/>
    </location>
</feature>
<feature type="disulfide bond" evidence="4">
    <location>
        <begin position="1450"/>
        <end position="1461"/>
    </location>
</feature>
<feature type="disulfide bond" evidence="4">
    <location>
        <begin position="1456"/>
        <end position="1470"/>
    </location>
</feature>
<feature type="disulfide bond" evidence="4">
    <location>
        <begin position="1472"/>
        <end position="1485"/>
    </location>
</feature>
<feature type="disulfide bond" evidence="4">
    <location>
        <begin position="1491"/>
        <end position="1502"/>
    </location>
</feature>
<feature type="disulfide bond" evidence="4">
    <location>
        <begin position="1497"/>
        <end position="1511"/>
    </location>
</feature>
<feature type="disulfide bond" evidence="4">
    <location>
        <begin position="1513"/>
        <end position="1526"/>
    </location>
</feature>
<feature type="disulfide bond" evidence="4">
    <location>
        <begin position="1534"/>
        <end position="1562"/>
    </location>
</feature>
<feature type="disulfide bond" evidence="4">
    <location>
        <begin position="1549"/>
        <end position="1574"/>
    </location>
</feature>
<feature type="disulfide bond" evidence="4">
    <location>
        <begin position="1563"/>
        <end position="1577"/>
    </location>
</feature>
<feature type="disulfide bond" evidence="4">
    <location>
        <begin position="1564"/>
        <end position="1589"/>
    </location>
</feature>
<feature type="disulfide bond" evidence="4">
    <location>
        <begin position="1610"/>
        <end position="1622"/>
    </location>
</feature>
<feature type="disulfide bond" evidence="4">
    <location>
        <begin position="1617"/>
        <end position="1631"/>
    </location>
</feature>
<feature type="disulfide bond" evidence="4">
    <location>
        <begin position="1633"/>
        <end position="1646"/>
    </location>
</feature>
<feature type="disulfide bond" evidence="4">
    <location>
        <begin position="1652"/>
        <end position="1663"/>
    </location>
</feature>
<feature type="disulfide bond" evidence="4">
    <location>
        <begin position="1658"/>
        <end position="1672"/>
    </location>
</feature>
<feature type="disulfide bond" evidence="4">
    <location>
        <begin position="1674"/>
        <end position="1687"/>
    </location>
</feature>
<feature type="disulfide bond" evidence="4">
    <location>
        <begin position="1770"/>
        <end position="1782"/>
    </location>
</feature>
<feature type="disulfide bond" evidence="4">
    <location>
        <begin position="1777"/>
        <end position="1791"/>
    </location>
</feature>
<feature type="disulfide bond" evidence="4">
    <location>
        <begin position="1793"/>
        <end position="1806"/>
    </location>
</feature>
<feature type="disulfide bond" evidence="4">
    <location>
        <begin position="1812"/>
        <end position="1824"/>
    </location>
</feature>
<feature type="disulfide bond" evidence="4">
    <location>
        <begin position="1818"/>
        <end position="1833"/>
    </location>
</feature>
<feature type="disulfide bond" evidence="4">
    <location>
        <begin position="1835"/>
        <end position="1847"/>
    </location>
</feature>
<feature type="disulfide bond" evidence="4">
    <location>
        <begin position="1853"/>
        <end position="1865"/>
    </location>
</feature>
<feature type="disulfide bond" evidence="4">
    <location>
        <begin position="1860"/>
        <end position="1874"/>
    </location>
</feature>
<feature type="disulfide bond" evidence="4">
    <location>
        <begin position="1876"/>
        <end position="1889"/>
    </location>
</feature>
<feature type="disulfide bond" evidence="4">
    <location>
        <begin position="1895"/>
        <end position="1905"/>
    </location>
</feature>
<feature type="disulfide bond" evidence="4">
    <location>
        <begin position="1900"/>
        <end position="1914"/>
    </location>
</feature>
<feature type="disulfide bond" evidence="4">
    <location>
        <begin position="1916"/>
        <end position="1928"/>
    </location>
</feature>
<feature type="disulfide bond" evidence="4">
    <location>
        <begin position="1934"/>
        <end position="1947"/>
    </location>
</feature>
<feature type="disulfide bond" evidence="4">
    <location>
        <begin position="1942"/>
        <end position="1956"/>
    </location>
</feature>
<feature type="disulfide bond" evidence="4">
    <location>
        <begin position="1958"/>
        <end position="1971"/>
    </location>
</feature>
<feature type="disulfide bond" evidence="4">
    <location>
        <begin position="1977"/>
        <end position="1989"/>
    </location>
</feature>
<feature type="disulfide bond" evidence="4">
    <location>
        <begin position="1984"/>
        <end position="1998"/>
    </location>
</feature>
<feature type="disulfide bond" evidence="4">
    <location>
        <begin position="2000"/>
        <end position="2011"/>
    </location>
</feature>
<feature type="disulfide bond" evidence="4">
    <location>
        <begin position="2017"/>
        <end position="2029"/>
    </location>
</feature>
<feature type="disulfide bond" evidence="4">
    <location>
        <begin position="2024"/>
        <end position="2038"/>
    </location>
</feature>
<feature type="disulfide bond" evidence="4">
    <location>
        <begin position="2040"/>
        <end position="2053"/>
    </location>
</feature>
<feature type="disulfide bond" evidence="1 4">
    <location>
        <begin position="2061"/>
        <end position="2083"/>
    </location>
</feature>
<feature type="disulfide bond" evidence="1 4">
    <location>
        <begin position="2070"/>
        <end position="2096"/>
    </location>
</feature>
<feature type="disulfide bond" evidence="1 4">
    <location>
        <begin position="2084"/>
        <end position="2099"/>
    </location>
</feature>
<feature type="disulfide bond" evidence="1 4">
    <location>
        <begin position="2085"/>
        <end position="2111"/>
    </location>
</feature>
<feature type="disulfide bond" evidence="4">
    <location>
        <begin position="2131"/>
        <end position="2142"/>
    </location>
</feature>
<feature type="disulfide bond" evidence="4">
    <location>
        <begin position="2137"/>
        <end position="2151"/>
    </location>
</feature>
<feature type="disulfide bond" evidence="4">
    <location>
        <begin position="2153"/>
        <end position="2164"/>
    </location>
</feature>
<feature type="disulfide bond" evidence="4">
    <location>
        <begin position="2170"/>
        <end position="2181"/>
    </location>
</feature>
<feature type="disulfide bond" evidence="4">
    <location>
        <begin position="2176"/>
        <end position="2190"/>
    </location>
</feature>
<feature type="disulfide bond" evidence="4">
    <location>
        <begin position="2192"/>
        <end position="2204"/>
    </location>
</feature>
<feature type="disulfide bond" evidence="4">
    <location>
        <begin position="2210"/>
        <end position="2221"/>
    </location>
</feature>
<feature type="disulfide bond" evidence="4">
    <location>
        <begin position="2217"/>
        <end position="2230"/>
    </location>
</feature>
<feature type="disulfide bond" evidence="4">
    <location>
        <begin position="2232"/>
        <end position="2245"/>
    </location>
</feature>
<feature type="disulfide bond" evidence="4">
    <location>
        <begin position="2251"/>
        <end position="2265"/>
    </location>
</feature>
<feature type="disulfide bond" evidence="4">
    <location>
        <begin position="2258"/>
        <end position="2274"/>
    </location>
</feature>
<feature type="disulfide bond" evidence="4">
    <location>
        <begin position="2276"/>
        <end position="2289"/>
    </location>
</feature>
<feature type="disulfide bond" evidence="4">
    <location>
        <begin position="2295"/>
        <end position="2307"/>
    </location>
</feature>
<feature type="disulfide bond" evidence="4">
    <location>
        <begin position="2302"/>
        <end position="2316"/>
    </location>
</feature>
<feature type="disulfide bond" evidence="4">
    <location>
        <begin position="2318"/>
        <end position="2331"/>
    </location>
</feature>
<feature type="disulfide bond" evidence="4">
    <location>
        <begin position="2406"/>
        <end position="2418"/>
    </location>
</feature>
<feature type="disulfide bond" evidence="4">
    <location>
        <begin position="2413"/>
        <end position="2427"/>
    </location>
</feature>
<feature type="disulfide bond" evidence="4">
    <location>
        <begin position="2429"/>
        <end position="2442"/>
    </location>
</feature>
<feature type="disulfide bond" evidence="4">
    <location>
        <begin position="2448"/>
        <end position="2459"/>
    </location>
</feature>
<feature type="disulfide bond" evidence="4">
    <location>
        <begin position="2455"/>
        <end position="2468"/>
    </location>
</feature>
<feature type="disulfide bond" evidence="4">
    <location>
        <begin position="2470"/>
        <end position="2483"/>
    </location>
</feature>
<feature type="disulfide bond" evidence="4">
    <location>
        <begin position="2489"/>
        <end position="2500"/>
    </location>
</feature>
<feature type="disulfide bond" evidence="4">
    <location>
        <begin position="2496"/>
        <end position="2509"/>
    </location>
</feature>
<feature type="disulfide bond" evidence="4">
    <location>
        <begin position="2511"/>
        <end position="2522"/>
    </location>
</feature>
<feature type="disulfide bond" evidence="4">
    <location>
        <begin position="2528"/>
        <end position="2541"/>
    </location>
</feature>
<feature type="disulfide bond" evidence="4">
    <location>
        <begin position="2535"/>
        <end position="2550"/>
    </location>
</feature>
<feature type="disulfide bond" evidence="4">
    <location>
        <begin position="2552"/>
        <end position="2565"/>
    </location>
</feature>
<feature type="disulfide bond" evidence="4">
    <location>
        <begin position="2571"/>
        <end position="2581"/>
    </location>
</feature>
<feature type="disulfide bond" evidence="4">
    <location>
        <begin position="2577"/>
        <end position="2590"/>
    </location>
</feature>
<feature type="disulfide bond" evidence="4">
    <location>
        <begin position="2592"/>
        <end position="2605"/>
    </location>
</feature>
<feature type="disulfide bond" evidence="4">
    <location>
        <begin position="2611"/>
        <end position="2622"/>
    </location>
</feature>
<feature type="disulfide bond" evidence="4">
    <location>
        <begin position="2617"/>
        <end position="2631"/>
    </location>
</feature>
<feature type="disulfide bond" evidence="4">
    <location>
        <begin position="2633"/>
        <end position="2646"/>
    </location>
</feature>
<feature type="disulfide bond" evidence="4">
    <location>
        <begin position="2652"/>
        <end position="2663"/>
    </location>
</feature>
<feature type="disulfide bond" evidence="4">
    <location>
        <begin position="2659"/>
        <end position="2672"/>
    </location>
</feature>
<feature type="disulfide bond" evidence="4">
    <location>
        <begin position="2674"/>
        <end position="2686"/>
    </location>
</feature>
<name>FBN1_PIG</name>
<proteinExistence type="evidence at transcript level"/>
<gene>
    <name evidence="1" type="primary">FBN1</name>
</gene>
<evidence type="ECO:0000250" key="1">
    <source>
        <dbReference type="UniProtKB" id="P35555"/>
    </source>
</evidence>
<evidence type="ECO:0000250" key="2">
    <source>
        <dbReference type="UniProtKB" id="Q61554"/>
    </source>
</evidence>
<evidence type="ECO:0000255" key="3"/>
<evidence type="ECO:0000255" key="4">
    <source>
        <dbReference type="PROSITE-ProRule" id="PRU00076"/>
    </source>
</evidence>
<evidence type="ECO:0000256" key="5">
    <source>
        <dbReference type="SAM" id="MobiDB-lite"/>
    </source>
</evidence>
<evidence type="ECO:0000305" key="6"/>
<protein>
    <recommendedName>
        <fullName evidence="1">Fibrillin-1</fullName>
    </recommendedName>
    <component>
        <recommendedName>
            <fullName evidence="1">Asprosin</fullName>
        </recommendedName>
    </component>
</protein>
<dbReference type="EMBL" id="AF073800">
    <property type="protein sequence ID" value="AAD50328.1"/>
    <property type="molecule type" value="mRNA"/>
</dbReference>
<dbReference type="RefSeq" id="NP_001001771.1">
    <property type="nucleotide sequence ID" value="NM_001001771.1"/>
</dbReference>
<dbReference type="BMRB" id="Q9TV36"/>
<dbReference type="SMR" id="Q9TV36"/>
<dbReference type="FunCoup" id="Q9TV36">
    <property type="interactions" value="313"/>
</dbReference>
<dbReference type="STRING" id="9823.ENSSSCP00000005017"/>
<dbReference type="GlyCosmos" id="Q9TV36">
    <property type="glycosylation" value="36 sites, No reported glycans"/>
</dbReference>
<dbReference type="GlyGen" id="Q9TV36">
    <property type="glycosylation" value="36 sites"/>
</dbReference>
<dbReference type="PaxDb" id="9823-ENSSSCP00000005017"/>
<dbReference type="PeptideAtlas" id="Q9TV36"/>
<dbReference type="GeneID" id="414836"/>
<dbReference type="KEGG" id="ssc:414836"/>
<dbReference type="CTD" id="2200"/>
<dbReference type="eggNOG" id="KOG1217">
    <property type="taxonomic scope" value="Eukaryota"/>
</dbReference>
<dbReference type="InParanoid" id="Q9TV36"/>
<dbReference type="OrthoDB" id="4062651at2759"/>
<dbReference type="Proteomes" id="UP000008227">
    <property type="component" value="Unplaced"/>
</dbReference>
<dbReference type="Proteomes" id="UP000314985">
    <property type="component" value="Unplaced"/>
</dbReference>
<dbReference type="Proteomes" id="UP000694570">
    <property type="component" value="Unplaced"/>
</dbReference>
<dbReference type="Proteomes" id="UP000694571">
    <property type="component" value="Unplaced"/>
</dbReference>
<dbReference type="Proteomes" id="UP000694720">
    <property type="component" value="Unplaced"/>
</dbReference>
<dbReference type="Proteomes" id="UP000694722">
    <property type="component" value="Unplaced"/>
</dbReference>
<dbReference type="Proteomes" id="UP000694723">
    <property type="component" value="Unplaced"/>
</dbReference>
<dbReference type="Proteomes" id="UP000694724">
    <property type="component" value="Unplaced"/>
</dbReference>
<dbReference type="Proteomes" id="UP000694725">
    <property type="component" value="Unplaced"/>
</dbReference>
<dbReference type="Proteomes" id="UP000694726">
    <property type="component" value="Unplaced"/>
</dbReference>
<dbReference type="Proteomes" id="UP000694727">
    <property type="component" value="Unplaced"/>
</dbReference>
<dbReference type="Proteomes" id="UP000694728">
    <property type="component" value="Unplaced"/>
</dbReference>
<dbReference type="GO" id="GO:0031012">
    <property type="term" value="C:extracellular matrix"/>
    <property type="evidence" value="ECO:0000318"/>
    <property type="project" value="GO_Central"/>
</dbReference>
<dbReference type="GO" id="GO:0005576">
    <property type="term" value="C:extracellular region"/>
    <property type="evidence" value="ECO:0000250"/>
    <property type="project" value="UniProtKB"/>
</dbReference>
<dbReference type="GO" id="GO:0001527">
    <property type="term" value="C:microfibril"/>
    <property type="evidence" value="ECO:0007669"/>
    <property type="project" value="UniProtKB-ARBA"/>
</dbReference>
<dbReference type="GO" id="GO:0005509">
    <property type="term" value="F:calcium ion binding"/>
    <property type="evidence" value="ECO:0007669"/>
    <property type="project" value="InterPro"/>
</dbReference>
<dbReference type="GO" id="GO:0005201">
    <property type="term" value="F:extracellular matrix structural constituent"/>
    <property type="evidence" value="ECO:0000318"/>
    <property type="project" value="GO_Central"/>
</dbReference>
<dbReference type="GO" id="GO:0008201">
    <property type="term" value="F:heparin binding"/>
    <property type="evidence" value="ECO:0000250"/>
    <property type="project" value="UniProtKB"/>
</dbReference>
<dbReference type="GO" id="GO:0005179">
    <property type="term" value="F:hormone activity"/>
    <property type="evidence" value="ECO:0007669"/>
    <property type="project" value="UniProtKB-KW"/>
</dbReference>
<dbReference type="GO" id="GO:0009653">
    <property type="term" value="P:anatomical structure morphogenesis"/>
    <property type="evidence" value="ECO:0000318"/>
    <property type="project" value="GO_Central"/>
</dbReference>
<dbReference type="CDD" id="cd00054">
    <property type="entry name" value="EGF_CA"/>
    <property type="match status" value="29"/>
</dbReference>
<dbReference type="FunFam" id="2.10.25.10:FF:000023">
    <property type="entry name" value="Fibrillin 2"/>
    <property type="match status" value="2"/>
</dbReference>
<dbReference type="FunFam" id="2.10.25.10:FF:000038">
    <property type="entry name" value="Fibrillin 2"/>
    <property type="match status" value="1"/>
</dbReference>
<dbReference type="FunFam" id="2.10.25.10:FF:000044">
    <property type="entry name" value="Fibrillin 2"/>
    <property type="match status" value="1"/>
</dbReference>
<dbReference type="FunFam" id="2.10.25.10:FF:000049">
    <property type="entry name" value="Fibrillin 2"/>
    <property type="match status" value="1"/>
</dbReference>
<dbReference type="FunFam" id="2.10.25.10:FF:000058">
    <property type="entry name" value="Fibrillin 2"/>
    <property type="match status" value="1"/>
</dbReference>
<dbReference type="FunFam" id="2.10.25.10:FF:000071">
    <property type="entry name" value="Fibrillin 2"/>
    <property type="match status" value="1"/>
</dbReference>
<dbReference type="FunFam" id="2.10.25.10:FF:000086">
    <property type="entry name" value="Fibrillin 2"/>
    <property type="match status" value="1"/>
</dbReference>
<dbReference type="FunFam" id="2.10.25.10:FF:000087">
    <property type="entry name" value="Fibrillin 2"/>
    <property type="match status" value="1"/>
</dbReference>
<dbReference type="FunFam" id="2.10.25.10:FF:000097">
    <property type="entry name" value="Fibrillin 2"/>
    <property type="match status" value="1"/>
</dbReference>
<dbReference type="FunFam" id="2.10.25.10:FF:000107">
    <property type="entry name" value="Fibrillin 2"/>
    <property type="match status" value="1"/>
</dbReference>
<dbReference type="FunFam" id="2.10.25.10:FF:000141">
    <property type="entry name" value="Fibrillin 2"/>
    <property type="match status" value="1"/>
</dbReference>
<dbReference type="FunFam" id="2.10.25.10:FF:000159">
    <property type="entry name" value="Fibrillin 2"/>
    <property type="match status" value="1"/>
</dbReference>
<dbReference type="FunFam" id="2.10.25.10:FF:000196">
    <property type="entry name" value="Fibrillin 2"/>
    <property type="match status" value="1"/>
</dbReference>
<dbReference type="FunFam" id="2.10.25.10:FF:000223">
    <property type="entry name" value="Fibrillin 2"/>
    <property type="match status" value="1"/>
</dbReference>
<dbReference type="FunFam" id="3.90.290.10:FF:000005">
    <property type="entry name" value="Fibrillin 2"/>
    <property type="match status" value="1"/>
</dbReference>
<dbReference type="FunFam" id="3.90.290.10:FF:000006">
    <property type="entry name" value="Fibrillin 2"/>
    <property type="match status" value="1"/>
</dbReference>
<dbReference type="FunFam" id="3.90.290.10:FF:000007">
    <property type="entry name" value="Fibrillin 2"/>
    <property type="match status" value="1"/>
</dbReference>
<dbReference type="FunFam" id="3.90.290.10:FF:000009">
    <property type="entry name" value="Fibrillin 2"/>
    <property type="match status" value="1"/>
</dbReference>
<dbReference type="FunFam" id="3.90.290.10:FF:000010">
    <property type="entry name" value="Fibrillin 2"/>
    <property type="match status" value="1"/>
</dbReference>
<dbReference type="FunFam" id="3.90.290.10:FF:000011">
    <property type="entry name" value="Fibrillin 2"/>
    <property type="match status" value="1"/>
</dbReference>
<dbReference type="FunFam" id="2.10.25.10:FF:000133">
    <property type="entry name" value="Fibrillin 3"/>
    <property type="match status" value="1"/>
</dbReference>
<dbReference type="FunFam" id="3.90.290.10:FF:000003">
    <property type="entry name" value="Fibrillin 3"/>
    <property type="match status" value="1"/>
</dbReference>
<dbReference type="FunFam" id="3.90.290.10:FF:000008">
    <property type="entry name" value="Fibrillin 3"/>
    <property type="match status" value="1"/>
</dbReference>
<dbReference type="FunFam" id="3.90.290.10:FF:000020">
    <property type="entry name" value="Fibrillin-1"/>
    <property type="match status" value="1"/>
</dbReference>
<dbReference type="FunFam" id="2.10.25.10:FF:000003">
    <property type="entry name" value="fibrillin-1 isoform X1"/>
    <property type="match status" value="15"/>
</dbReference>
<dbReference type="FunFam" id="2.10.25.10:FF:000194">
    <property type="entry name" value="Latent transforming growth factor beta binding protein 2"/>
    <property type="match status" value="1"/>
</dbReference>
<dbReference type="FunFam" id="2.10.25.10:FF:000002">
    <property type="entry name" value="Latent-transforming growth factor beta-binding protein 3"/>
    <property type="match status" value="1"/>
</dbReference>
<dbReference type="FunFam" id="2.10.25.10:FF:000014">
    <property type="entry name" value="Latent-transforming growth factor beta-binding protein 3"/>
    <property type="match status" value="3"/>
</dbReference>
<dbReference type="FunFam" id="2.10.25.10:FF:000620">
    <property type="entry name" value="Mutant fibrillin-1"/>
    <property type="match status" value="1"/>
</dbReference>
<dbReference type="FunFam" id="2.10.25.10:FF:000010">
    <property type="entry name" value="Pro-epidermal growth factor"/>
    <property type="match status" value="2"/>
</dbReference>
<dbReference type="FunFam" id="2.10.25.10:FF:000096">
    <property type="entry name" value="Putative fibrillin 2"/>
    <property type="match status" value="1"/>
</dbReference>
<dbReference type="FunFam" id="2.10.25.10:FF:000008">
    <property type="entry name" value="Signal peptide, CUB domain, EGF-like 2"/>
    <property type="match status" value="1"/>
</dbReference>
<dbReference type="Gene3D" id="2.10.25.10">
    <property type="entry name" value="Laminin"/>
    <property type="match status" value="46"/>
</dbReference>
<dbReference type="Gene3D" id="3.90.290.10">
    <property type="entry name" value="TGF-beta binding (TB) domain"/>
    <property type="match status" value="9"/>
</dbReference>
<dbReference type="InterPro" id="IPR026823">
    <property type="entry name" value="cEGF"/>
</dbReference>
<dbReference type="InterPro" id="IPR001881">
    <property type="entry name" value="EGF-like_Ca-bd_dom"/>
</dbReference>
<dbReference type="InterPro" id="IPR013032">
    <property type="entry name" value="EGF-like_CS"/>
</dbReference>
<dbReference type="InterPro" id="IPR000742">
    <property type="entry name" value="EGF-like_dom"/>
</dbReference>
<dbReference type="InterPro" id="IPR000152">
    <property type="entry name" value="EGF-type_Asp/Asn_hydroxyl_site"/>
</dbReference>
<dbReference type="InterPro" id="IPR018097">
    <property type="entry name" value="EGF_Ca-bd_CS"/>
</dbReference>
<dbReference type="InterPro" id="IPR024731">
    <property type="entry name" value="EGF_dom"/>
</dbReference>
<dbReference type="InterPro" id="IPR049388">
    <property type="entry name" value="FBN_EGF_N"/>
</dbReference>
<dbReference type="InterPro" id="IPR040872">
    <property type="entry name" value="Fibrillin_U_N"/>
</dbReference>
<dbReference type="InterPro" id="IPR009030">
    <property type="entry name" value="Growth_fac_rcpt_cys_sf"/>
</dbReference>
<dbReference type="InterPro" id="IPR049883">
    <property type="entry name" value="NOTCH1_EGF-like"/>
</dbReference>
<dbReference type="InterPro" id="IPR017878">
    <property type="entry name" value="TB_dom"/>
</dbReference>
<dbReference type="InterPro" id="IPR036773">
    <property type="entry name" value="TB_dom_sf"/>
</dbReference>
<dbReference type="InterPro" id="IPR052080">
    <property type="entry name" value="vWF_C/EGF_Fibrillin"/>
</dbReference>
<dbReference type="PANTHER" id="PTHR47333:SF5">
    <property type="entry name" value="FIBRILLIN-3"/>
    <property type="match status" value="1"/>
</dbReference>
<dbReference type="PANTHER" id="PTHR47333">
    <property type="entry name" value="VON WILLEBRAND FACTOR C AND EGF DOMAIN-CONTAINING PROTEIN"/>
    <property type="match status" value="1"/>
</dbReference>
<dbReference type="Pfam" id="PF12662">
    <property type="entry name" value="cEGF"/>
    <property type="match status" value="4"/>
</dbReference>
<dbReference type="Pfam" id="PF12947">
    <property type="entry name" value="EGF_3"/>
    <property type="match status" value="1"/>
</dbReference>
<dbReference type="Pfam" id="PF07645">
    <property type="entry name" value="EGF_CA"/>
    <property type="match status" value="34"/>
</dbReference>
<dbReference type="Pfam" id="PF21364">
    <property type="entry name" value="EGF_FBN_1st"/>
    <property type="match status" value="1"/>
</dbReference>
<dbReference type="Pfam" id="PF18193">
    <property type="entry name" value="Fibrillin_U_N"/>
    <property type="match status" value="1"/>
</dbReference>
<dbReference type="Pfam" id="PF14670">
    <property type="entry name" value="FXa_inhibition"/>
    <property type="match status" value="1"/>
</dbReference>
<dbReference type="Pfam" id="PF12661">
    <property type="entry name" value="hEGF"/>
    <property type="match status" value="1"/>
</dbReference>
<dbReference type="Pfam" id="PF00683">
    <property type="entry name" value="TB"/>
    <property type="match status" value="9"/>
</dbReference>
<dbReference type="PIRSF" id="PIRSF036312">
    <property type="entry name" value="Fibrillin"/>
    <property type="match status" value="1"/>
</dbReference>
<dbReference type="SMART" id="SM00181">
    <property type="entry name" value="EGF"/>
    <property type="match status" value="47"/>
</dbReference>
<dbReference type="SMART" id="SM00179">
    <property type="entry name" value="EGF_CA"/>
    <property type="match status" value="44"/>
</dbReference>
<dbReference type="SUPFAM" id="SSF57196">
    <property type="entry name" value="EGF/Laminin"/>
    <property type="match status" value="11"/>
</dbReference>
<dbReference type="SUPFAM" id="SSF57184">
    <property type="entry name" value="Growth factor receptor domain"/>
    <property type="match status" value="10"/>
</dbReference>
<dbReference type="SUPFAM" id="SSF57581">
    <property type="entry name" value="TB module/8-cys domain"/>
    <property type="match status" value="9"/>
</dbReference>
<dbReference type="PROSITE" id="PS00010">
    <property type="entry name" value="ASX_HYDROXYL"/>
    <property type="match status" value="41"/>
</dbReference>
<dbReference type="PROSITE" id="PS00022">
    <property type="entry name" value="EGF_1"/>
    <property type="match status" value="2"/>
</dbReference>
<dbReference type="PROSITE" id="PS01186">
    <property type="entry name" value="EGF_2"/>
    <property type="match status" value="36"/>
</dbReference>
<dbReference type="PROSITE" id="PS50026">
    <property type="entry name" value="EGF_3"/>
    <property type="match status" value="43"/>
</dbReference>
<dbReference type="PROSITE" id="PS01187">
    <property type="entry name" value="EGF_CA"/>
    <property type="match status" value="41"/>
</dbReference>
<dbReference type="PROSITE" id="PS51364">
    <property type="entry name" value="TB"/>
    <property type="match status" value="9"/>
</dbReference>
<organism>
    <name type="scientific">Sus scrofa</name>
    <name type="common">Pig</name>
    <dbReference type="NCBI Taxonomy" id="9823"/>
    <lineage>
        <taxon>Eukaryota</taxon>
        <taxon>Metazoa</taxon>
        <taxon>Chordata</taxon>
        <taxon>Craniata</taxon>
        <taxon>Vertebrata</taxon>
        <taxon>Euteleostomi</taxon>
        <taxon>Mammalia</taxon>
        <taxon>Eutheria</taxon>
        <taxon>Laurasiatheria</taxon>
        <taxon>Artiodactyla</taxon>
        <taxon>Suina</taxon>
        <taxon>Suidae</taxon>
        <taxon>Sus</taxon>
    </lineage>
</organism>
<keyword id="KW-0106">Calcium</keyword>
<keyword id="KW-1015">Disulfide bond</keyword>
<keyword id="KW-0245">EGF-like domain</keyword>
<keyword id="KW-0272">Extracellular matrix</keyword>
<keyword id="KW-0325">Glycoprotein</keyword>
<keyword id="KW-0372">Hormone</keyword>
<keyword id="KW-0597">Phosphoprotein</keyword>
<keyword id="KW-1185">Reference proteome</keyword>
<keyword id="KW-0677">Repeat</keyword>
<keyword id="KW-0964">Secreted</keyword>
<keyword id="KW-0732">Signal</keyword>
<comment type="function">
    <molecule>Fibrillin-1</molecule>
    <text evidence="1 2">Structural component of the 10-12 nm diameter microfibrils of the extracellular matrix, which conveys both structural and regulatory properties to load-bearing connective tissues. Fibrillin-1-containing microfibrils provide long-term force bearing structural support. In tissues such as the lung, blood vessels and skin, microfibrils form the periphery of the elastic fiber, acting as a scaffold for the deposition of elastin. In addition, microfibrils can occur as elastin-independent networks in tissues such as the ciliary zonule, tendon, cornea and glomerulus where they provide tensile strength and have anchoring roles. Fibrillin-1 also plays a key role in tissue homeostasis through specific interactions with growth factors, such as the bone morphogenetic proteins (BMPs), growth and differentiation factors (GDFs) and latent transforming growth factor-beta-binding proteins (LTBPs), cell-surface integrins and other extracellular matrix protein and proteoglycan components. Regulates osteoblast maturation by controlling TGF-beta bioavailability and calibrating TGF-beta and BMP levels, respectively. Negatively regulates osteoclastogenesis by binding and sequestering an osteoclast differentiation and activation factor TNFSF11. This leads to disruption of TNFSF11-induced Ca(2+) signaling and impairment of TNFSF11-mediated nuclear translocation and activation of transcription factor NFATC1 which regulates genes important for osteoclast differentiation and function. Mediates cell adhesion via its binding to cell surface receptors integrins ITGAV:ITGB3 and ITGA5:ITGB1. Binds heparin and this interaction plays an important role in the assembly of microfibrils.</text>
</comment>
<comment type="function">
    <molecule>Asprosin</molecule>
    <text evidence="1">Hormone that targets the liver to increase plasma glucose levels. Secreted by white adipose tissue and circulates in the plasma. Acts in response to fasting and promotes blood glucose elevation by binding to the surface of hepatocytes. Promotes hepatocyte glucose release by activating the protein kinase A activity in the liver, resulting in rapid glucose release into the circulation.</text>
</comment>
<comment type="subunit">
    <molecule>Fibrillin-1</molecule>
    <text evidence="1 2">Interacts with COL16A1. Interacts with integrin alpha-V/beta-3. Interacts with ADAMTS10; this interaction promotes microfibril assembly. Interacts with THSD4; this interaction promotes fibril formation. Interacts (via N-terminal domain) with FBLN2 and FBLN5. Interacts with ELN. Forms a ternary complex with ELN and FBLN2 or FBLN5 and a significant interaction with ELN seen only in the presence of FBLN2 or FBLN5. Interacts (via N-terminal domain) with LTBP2 (via C-terminal domain) in a Ca(+2)-dependent manner. Interacts (via N-terminal domain) with LTBP1 (via C-terminal domain). Interacts with integrins ITGA5:ITGB1, ITGAV:ITGB3 and ITGAV:ITGB6. Interacts (via N-terminal domain) with BMP2, BMP4, BMP7, BMP10 and GDF5. Interacts (via N-terminal domain) with MFAP2 and MFAP5. Interacts with ADAMTSL5. Interacts with MFAP4. Interacts (via N-terminal domain) with TNFSF11 in a Ca(+2)-dependent manner. Interacts (via N-terminal domain) with EFEMP2; this interaction inhibits EFEMP2 binding to LOX and ELN (By similarity).</text>
</comment>
<comment type="subcellular location">
    <subcellularLocation>
        <location evidence="1">Secreted</location>
    </subcellularLocation>
    <text evidence="1">Fibrillin-1 and Asprosin chains are still linked together during the secretion from cells, but are subsequently separated by furin.</text>
</comment>
<comment type="subcellular location">
    <molecule>Asprosin</molecule>
    <subcellularLocation>
        <location evidence="1">Secreted</location>
    </subcellularLocation>
    <text evidence="1">Secreted into the plasma.</text>
</comment>
<comment type="subcellular location">
    <molecule>Fibrillin-1</molecule>
    <subcellularLocation>
        <location evidence="1">Secreted</location>
        <location evidence="1">Extracellular space</location>
        <location evidence="1">Extracellular matrix</location>
    </subcellularLocation>
</comment>
<comment type="PTM">
    <text evidence="1">Cleavage of N- and C-terminus by furin is required for incorporation into the extracellular matrix and assembly into microfibrils. The C-terminus, which corresponds to the Asprosin chain, was initially thought to constitute a propeptide. Fibrillin-1 and Asprosin chains are still linked together during the secretion from cells, but are subsequently separated by furin, an essential step for incorporation of Fibrillin-1 into the nascent microfibrils.</text>
</comment>
<comment type="PTM">
    <molecule>Fibrillin-1</molecule>
    <text evidence="1">Forms intermolecular disulfide bonds either with other fibrillin-1 molecules or with other components of the microfibrils.</text>
</comment>
<comment type="PTM">
    <text evidence="1">O-glycosylated on serine residues by POGLUT2 and POGLUT3 which is necessary for efficient protein secretion.</text>
</comment>
<comment type="similarity">
    <text evidence="6">Belongs to the fibrillin family.</text>
</comment>
<accession>Q9TV36</accession>
<reference key="1">
    <citation type="journal article" date="1999" name="Genomics">
        <title>Revised genomic organization of FBN1 and significance for regulated gene expression.</title>
        <authorList>
            <person name="Biery N.J."/>
            <person name="Eldadah Z.A."/>
            <person name="Moore C.S."/>
            <person name="Stetten G."/>
            <person name="Spencer F."/>
            <person name="Dietz H.C."/>
        </authorList>
    </citation>
    <scope>NUCLEOTIDE SEQUENCE [MRNA]</scope>
    <source>
        <tissue>Lung</tissue>
    </source>
</reference>